<keyword id="KW-0030">Aminoacyl-tRNA synthetase</keyword>
<keyword id="KW-0067">ATP-binding</keyword>
<keyword id="KW-0963">Cytoplasm</keyword>
<keyword id="KW-0436">Ligase</keyword>
<keyword id="KW-0547">Nucleotide-binding</keyword>
<keyword id="KW-0648">Protein biosynthesis</keyword>
<keyword id="KW-1185">Reference proteome</keyword>
<keyword id="KW-0694">RNA-binding</keyword>
<comment type="function">
    <text evidence="1">Catalyzes the attachment of tyrosine to tRNA(Tyr) in a two-step reaction: tyrosine is first activated by ATP to form Tyr-AMP and then transferred to the acceptor end of tRNA(Tyr).</text>
</comment>
<comment type="catalytic activity">
    <reaction evidence="1">
        <text>tRNA(Tyr) + L-tyrosine + ATP = L-tyrosyl-tRNA(Tyr) + AMP + diphosphate + H(+)</text>
        <dbReference type="Rhea" id="RHEA:10220"/>
        <dbReference type="Rhea" id="RHEA-COMP:9706"/>
        <dbReference type="Rhea" id="RHEA-COMP:9707"/>
        <dbReference type="ChEBI" id="CHEBI:15378"/>
        <dbReference type="ChEBI" id="CHEBI:30616"/>
        <dbReference type="ChEBI" id="CHEBI:33019"/>
        <dbReference type="ChEBI" id="CHEBI:58315"/>
        <dbReference type="ChEBI" id="CHEBI:78442"/>
        <dbReference type="ChEBI" id="CHEBI:78536"/>
        <dbReference type="ChEBI" id="CHEBI:456215"/>
        <dbReference type="EC" id="6.1.1.1"/>
    </reaction>
</comment>
<comment type="subunit">
    <text evidence="1">Homodimer.</text>
</comment>
<comment type="subcellular location">
    <subcellularLocation>
        <location evidence="1">Cytoplasm</location>
    </subcellularLocation>
</comment>
<comment type="similarity">
    <text evidence="1">Belongs to the class-I aminoacyl-tRNA synthetase family. TyrS type 1 subfamily.</text>
</comment>
<proteinExistence type="inferred from homology"/>
<feature type="chain" id="PRO_0000234710" description="Tyrosine--tRNA ligase">
    <location>
        <begin position="1"/>
        <end position="425"/>
    </location>
</feature>
<feature type="domain" description="S4 RNA-binding" evidence="1">
    <location>
        <begin position="357"/>
        <end position="414"/>
    </location>
</feature>
<feature type="short sequence motif" description="'HIGH' region">
    <location>
        <begin position="42"/>
        <end position="51"/>
    </location>
</feature>
<feature type="short sequence motif" description="'KMSKS' region">
    <location>
        <begin position="235"/>
        <end position="239"/>
    </location>
</feature>
<feature type="binding site" evidence="1">
    <location>
        <position position="37"/>
    </location>
    <ligand>
        <name>L-tyrosine</name>
        <dbReference type="ChEBI" id="CHEBI:58315"/>
    </ligand>
</feature>
<feature type="binding site" evidence="1">
    <location>
        <position position="175"/>
    </location>
    <ligand>
        <name>L-tyrosine</name>
        <dbReference type="ChEBI" id="CHEBI:58315"/>
    </ligand>
</feature>
<feature type="binding site" evidence="1">
    <location>
        <position position="179"/>
    </location>
    <ligand>
        <name>L-tyrosine</name>
        <dbReference type="ChEBI" id="CHEBI:58315"/>
    </ligand>
</feature>
<feature type="binding site" evidence="1">
    <location>
        <position position="238"/>
    </location>
    <ligand>
        <name>ATP</name>
        <dbReference type="ChEBI" id="CHEBI:30616"/>
    </ligand>
</feature>
<accession>Q6D5V2</accession>
<sequence length="425" mass="47456">MASSNLIKQLQERGLIAQVTDEEALAERLAQGPIALYCGFDPTADSLHLGHLVPLLCLKRFQLSGHKPVALVGGATGLIGDPSFKATERKLNTSETVGEWVEKIRRQVSPFLDFDCGKNSAIAANNYDWFGNMNVLDFLRDIGKHFSVNQMISKEAVKQRLNRDDVGISFTEFSYNLLQGYDFASLNKQHDVELQIGGSDQWGNITSGIDLTRRMNQKQVYGLTVPLITKSDGTKFGKTEGGAIWLDASKTSPYKFYQFWINTADADVYRFLKFFTFMSLENIDALEEEDKNSGKAPRAQYVLAEDVTRMVHGEAGLEAARRITQSLFSGALQDMTQDDFAQLAQDGMPIIELENSADLQQALVSAELVPSRGQARTMISSNAVTINGEKQANPEYIFSASDRLFDRYTLLRRGKKHYCLICWKA</sequence>
<evidence type="ECO:0000255" key="1">
    <source>
        <dbReference type="HAMAP-Rule" id="MF_02006"/>
    </source>
</evidence>
<protein>
    <recommendedName>
        <fullName evidence="1">Tyrosine--tRNA ligase</fullName>
        <ecNumber evidence="1">6.1.1.1</ecNumber>
    </recommendedName>
    <alternativeName>
        <fullName evidence="1">Tyrosyl-tRNA synthetase</fullName>
        <shortName evidence="1">TyrRS</shortName>
    </alternativeName>
</protein>
<name>SYY_PECAS</name>
<dbReference type="EC" id="6.1.1.1" evidence="1"/>
<dbReference type="EMBL" id="BX950851">
    <property type="protein sequence ID" value="CAG74839.1"/>
    <property type="molecule type" value="Genomic_DNA"/>
</dbReference>
<dbReference type="RefSeq" id="WP_011093502.1">
    <property type="nucleotide sequence ID" value="NC_004547.2"/>
</dbReference>
<dbReference type="SMR" id="Q6D5V2"/>
<dbReference type="STRING" id="218491.ECA1936"/>
<dbReference type="GeneID" id="57209359"/>
<dbReference type="KEGG" id="eca:ECA1936"/>
<dbReference type="PATRIC" id="fig|218491.5.peg.1969"/>
<dbReference type="eggNOG" id="COG0162">
    <property type="taxonomic scope" value="Bacteria"/>
</dbReference>
<dbReference type="HOGENOM" id="CLU_024003_0_3_6"/>
<dbReference type="OrthoDB" id="9804243at2"/>
<dbReference type="Proteomes" id="UP000007966">
    <property type="component" value="Chromosome"/>
</dbReference>
<dbReference type="GO" id="GO:0005829">
    <property type="term" value="C:cytosol"/>
    <property type="evidence" value="ECO:0007669"/>
    <property type="project" value="TreeGrafter"/>
</dbReference>
<dbReference type="GO" id="GO:0005524">
    <property type="term" value="F:ATP binding"/>
    <property type="evidence" value="ECO:0007669"/>
    <property type="project" value="UniProtKB-UniRule"/>
</dbReference>
<dbReference type="GO" id="GO:0003723">
    <property type="term" value="F:RNA binding"/>
    <property type="evidence" value="ECO:0007669"/>
    <property type="project" value="UniProtKB-KW"/>
</dbReference>
<dbReference type="GO" id="GO:0004831">
    <property type="term" value="F:tyrosine-tRNA ligase activity"/>
    <property type="evidence" value="ECO:0007669"/>
    <property type="project" value="UniProtKB-UniRule"/>
</dbReference>
<dbReference type="GO" id="GO:0006437">
    <property type="term" value="P:tyrosyl-tRNA aminoacylation"/>
    <property type="evidence" value="ECO:0007669"/>
    <property type="project" value="UniProtKB-UniRule"/>
</dbReference>
<dbReference type="CDD" id="cd00165">
    <property type="entry name" value="S4"/>
    <property type="match status" value="1"/>
</dbReference>
<dbReference type="CDD" id="cd00805">
    <property type="entry name" value="TyrRS_core"/>
    <property type="match status" value="1"/>
</dbReference>
<dbReference type="FunFam" id="1.10.240.10:FF:000001">
    <property type="entry name" value="Tyrosine--tRNA ligase"/>
    <property type="match status" value="1"/>
</dbReference>
<dbReference type="FunFam" id="3.40.50.620:FF:000008">
    <property type="entry name" value="Tyrosine--tRNA ligase"/>
    <property type="match status" value="1"/>
</dbReference>
<dbReference type="Gene3D" id="3.40.50.620">
    <property type="entry name" value="HUPs"/>
    <property type="match status" value="1"/>
</dbReference>
<dbReference type="Gene3D" id="3.10.290.10">
    <property type="entry name" value="RNA-binding S4 domain"/>
    <property type="match status" value="1"/>
</dbReference>
<dbReference type="Gene3D" id="1.10.240.10">
    <property type="entry name" value="Tyrosyl-Transfer RNA Synthetase"/>
    <property type="match status" value="1"/>
</dbReference>
<dbReference type="HAMAP" id="MF_02006">
    <property type="entry name" value="Tyr_tRNA_synth_type1"/>
    <property type="match status" value="1"/>
</dbReference>
<dbReference type="InterPro" id="IPR001412">
    <property type="entry name" value="aa-tRNA-synth_I_CS"/>
</dbReference>
<dbReference type="InterPro" id="IPR002305">
    <property type="entry name" value="aa-tRNA-synth_Ic"/>
</dbReference>
<dbReference type="InterPro" id="IPR014729">
    <property type="entry name" value="Rossmann-like_a/b/a_fold"/>
</dbReference>
<dbReference type="InterPro" id="IPR002942">
    <property type="entry name" value="S4_RNA-bd"/>
</dbReference>
<dbReference type="InterPro" id="IPR036986">
    <property type="entry name" value="S4_RNA-bd_sf"/>
</dbReference>
<dbReference type="InterPro" id="IPR054608">
    <property type="entry name" value="SYY-like_C"/>
</dbReference>
<dbReference type="InterPro" id="IPR002307">
    <property type="entry name" value="Tyr-tRNA-ligase"/>
</dbReference>
<dbReference type="InterPro" id="IPR024088">
    <property type="entry name" value="Tyr-tRNA-ligase_bac-type"/>
</dbReference>
<dbReference type="InterPro" id="IPR024107">
    <property type="entry name" value="Tyr-tRNA-ligase_bac_1"/>
</dbReference>
<dbReference type="NCBIfam" id="TIGR00234">
    <property type="entry name" value="tyrS"/>
    <property type="match status" value="1"/>
</dbReference>
<dbReference type="PANTHER" id="PTHR11766:SF0">
    <property type="entry name" value="TYROSINE--TRNA LIGASE, MITOCHONDRIAL"/>
    <property type="match status" value="1"/>
</dbReference>
<dbReference type="PANTHER" id="PTHR11766">
    <property type="entry name" value="TYROSYL-TRNA SYNTHETASE"/>
    <property type="match status" value="1"/>
</dbReference>
<dbReference type="Pfam" id="PF22421">
    <property type="entry name" value="SYY_C-terminal"/>
    <property type="match status" value="1"/>
</dbReference>
<dbReference type="Pfam" id="PF00579">
    <property type="entry name" value="tRNA-synt_1b"/>
    <property type="match status" value="1"/>
</dbReference>
<dbReference type="PRINTS" id="PR01040">
    <property type="entry name" value="TRNASYNTHTYR"/>
</dbReference>
<dbReference type="SMART" id="SM00363">
    <property type="entry name" value="S4"/>
    <property type="match status" value="1"/>
</dbReference>
<dbReference type="SUPFAM" id="SSF55174">
    <property type="entry name" value="Alpha-L RNA-binding motif"/>
    <property type="match status" value="1"/>
</dbReference>
<dbReference type="SUPFAM" id="SSF52374">
    <property type="entry name" value="Nucleotidylyl transferase"/>
    <property type="match status" value="1"/>
</dbReference>
<dbReference type="PROSITE" id="PS00178">
    <property type="entry name" value="AA_TRNA_LIGASE_I"/>
    <property type="match status" value="1"/>
</dbReference>
<dbReference type="PROSITE" id="PS50889">
    <property type="entry name" value="S4"/>
    <property type="match status" value="1"/>
</dbReference>
<gene>
    <name evidence="1" type="primary">tyrS</name>
    <name type="ordered locus">ECA1936</name>
</gene>
<organism>
    <name type="scientific">Pectobacterium atrosepticum (strain SCRI 1043 / ATCC BAA-672)</name>
    <name type="common">Erwinia carotovora subsp. atroseptica</name>
    <dbReference type="NCBI Taxonomy" id="218491"/>
    <lineage>
        <taxon>Bacteria</taxon>
        <taxon>Pseudomonadati</taxon>
        <taxon>Pseudomonadota</taxon>
        <taxon>Gammaproteobacteria</taxon>
        <taxon>Enterobacterales</taxon>
        <taxon>Pectobacteriaceae</taxon>
        <taxon>Pectobacterium</taxon>
    </lineage>
</organism>
<reference key="1">
    <citation type="journal article" date="2004" name="Proc. Natl. Acad. Sci. U.S.A.">
        <title>Genome sequence of the enterobacterial phytopathogen Erwinia carotovora subsp. atroseptica and characterization of virulence factors.</title>
        <authorList>
            <person name="Bell K.S."/>
            <person name="Sebaihia M."/>
            <person name="Pritchard L."/>
            <person name="Holden M.T.G."/>
            <person name="Hyman L.J."/>
            <person name="Holeva M.C."/>
            <person name="Thomson N.R."/>
            <person name="Bentley S.D."/>
            <person name="Churcher L.J.C."/>
            <person name="Mungall K."/>
            <person name="Atkin R."/>
            <person name="Bason N."/>
            <person name="Brooks K."/>
            <person name="Chillingworth T."/>
            <person name="Clark K."/>
            <person name="Doggett J."/>
            <person name="Fraser A."/>
            <person name="Hance Z."/>
            <person name="Hauser H."/>
            <person name="Jagels K."/>
            <person name="Moule S."/>
            <person name="Norbertczak H."/>
            <person name="Ormond D."/>
            <person name="Price C."/>
            <person name="Quail M.A."/>
            <person name="Sanders M."/>
            <person name="Walker D."/>
            <person name="Whitehead S."/>
            <person name="Salmond G.P.C."/>
            <person name="Birch P.R.J."/>
            <person name="Parkhill J."/>
            <person name="Toth I.K."/>
        </authorList>
    </citation>
    <scope>NUCLEOTIDE SEQUENCE [LARGE SCALE GENOMIC DNA]</scope>
    <source>
        <strain>SCRI 1043 / ATCC BAA-672</strain>
    </source>
</reference>